<organism>
    <name type="scientific">Flavobacterium sp. (strain SK1022)</name>
    <dbReference type="NCBI Taxonomy" id="148444"/>
    <lineage>
        <taxon>Bacteria</taxon>
        <taxon>Pseudomonadati</taxon>
        <taxon>Bacteroidota</taxon>
        <taxon>Flavobacteriia</taxon>
        <taxon>Flavobacteriales</taxon>
        <taxon>Flavobacteriaceae</taxon>
        <taxon>Flavobacterium</taxon>
    </lineage>
</organism>
<comment type="function">
    <text evidence="3">Cleaves asparagine-linked oligomannose and hybrid, but not complex, oligosaccharides from glycoproteins.</text>
</comment>
<comment type="catalytic activity">
    <reaction>
        <text>an N(4)-(oligosaccharide-(1-&gt;3)-[oligosaccharide-(1-&gt;6)]-beta-D-Man-(1-&gt;4)-beta-D-GlcNAc-(1-&gt;4)-alpha-D-GlcNAc)-L-asparaginyl-[protein] + H2O = an oligosaccharide-(1-&gt;3)-[oligosaccharide-(1-&gt;6)]-beta-D-Man-(1-&gt;4)-D-GlcNAc + N(4)-(N-acetyl-beta-D-glucosaminyl)-L-asparaginyl-[protein]</text>
        <dbReference type="Rhea" id="RHEA:73067"/>
        <dbReference type="Rhea" id="RHEA-COMP:12603"/>
        <dbReference type="Rhea" id="RHEA-COMP:18176"/>
        <dbReference type="ChEBI" id="CHEBI:15377"/>
        <dbReference type="ChEBI" id="CHEBI:132248"/>
        <dbReference type="ChEBI" id="CHEBI:192714"/>
        <dbReference type="ChEBI" id="CHEBI:192715"/>
        <dbReference type="EC" id="3.2.1.96"/>
    </reaction>
</comment>
<comment type="biophysicochemical properties">
    <phDependence>
        <text evidence="3">Optimum pH is 5.0-9.0.</text>
    </phDependence>
</comment>
<comment type="subunit">
    <text>Monomer.</text>
</comment>
<comment type="subcellular location">
    <subcellularLocation>
        <location evidence="3">Secreted</location>
    </subcellularLocation>
</comment>
<comment type="similarity">
    <text evidence="5">Belongs to the glycosyl hydrolase 18 family.</text>
</comment>
<reference key="1">
    <citation type="journal article" date="2001" name="Biosci. Biotechnol. Biochem.">
        <title>Identification of amino acid residues essential for the substrate specificity of Flavobacterium sp. endo-beta-N-acetylglucosaminidase.</title>
        <authorList>
            <person name="Fujita K."/>
            <person name="Nakatake R."/>
            <person name="Yamabe K."/>
            <person name="Watanabe A."/>
            <person name="Asada Y."/>
            <person name="Takegawa K."/>
        </authorList>
    </citation>
    <scope>NUCLEOTIDE SEQUENCE [GENOMIC DNA]</scope>
    <scope>FUNCTION</scope>
    <scope>SUBCELLULAR LOCATION</scope>
    <scope>BIOPHYSICOCHEMICAL PROPERTIES</scope>
    <scope>SUBSTRATE SPECIFICITY</scope>
    <scope>MUTAGENESIS OF TYR-60; ASP-168; GLY-169; ASP-173; ASP-174; GLU-175 AND TYR-238</scope>
</reference>
<reference key="2">
    <citation type="journal article" date="1991" name="Eur. J. Biochem.">
        <title>Complete amino acid sequence of endo-beta-N-acetylglucosaminidase from Flavobacterium sp.</title>
        <authorList>
            <person name="Takegawa K."/>
            <person name="Mikami B."/>
            <person name="Iwahara S."/>
            <person name="Morita Y."/>
            <person name="Yamamoto K."/>
            <person name="Tochikura T."/>
        </authorList>
    </citation>
    <scope>PROTEIN SEQUENCE OF 48-314</scope>
</reference>
<protein>
    <recommendedName>
        <fullName>Endo-beta-N-acetylglucosaminidase</fullName>
        <ecNumber>3.2.1.96</ecNumber>
    </recommendedName>
    <alternativeName>
        <fullName>DI-N-acetylchitobiosyl beta-N-acetylglucosaminidase</fullName>
    </alternativeName>
    <alternativeName>
        <fullName>Endo-Fsp</fullName>
    </alternativeName>
    <alternativeName>
        <fullName>Mannosyl-glycoprotein endo-beta-N-acetyl-glucosaminidase</fullName>
    </alternativeName>
</protein>
<sequence length="314" mass="32936">MQFGIVAAIADGGRTARAGGSVRPPRRPPASHTAWGLPRGRPTGQPHATPTKSGPTSIAYVEVNNDQLANVGRYQLANGANAFDVAIIFAANINWNGSKAVLYNNENVQATLDDAATQIRPLQAKGIKVSLSILGNHQGAGIANFPTQAAAEDFAAQVSATVSKYGLDGVDLDDEYSDYGTNGTPQPNQQSIGWLISALRADVPGKLISFYDIGPASSALSSSSSTIGSKLDYAWNPYYGTYSAPSIPGLDKSRLSAAAVDVQNTPQSTAVSLAQRTKADGYGVFMTYNLPDGDVSPYVSSMTKVLYGQAATYH</sequence>
<feature type="signal peptide" evidence="4">
    <location>
        <begin position="1"/>
        <end position="47"/>
    </location>
</feature>
<feature type="chain" id="PRO_0000077053" description="Endo-beta-N-acetylglucosaminidase">
    <location>
        <begin position="48"/>
        <end position="314"/>
    </location>
</feature>
<feature type="domain" description="GH18" evidence="1">
    <location>
        <begin position="55"/>
        <end position="309"/>
    </location>
</feature>
<feature type="region of interest" description="Disordered" evidence="2">
    <location>
        <begin position="14"/>
        <end position="54"/>
    </location>
</feature>
<feature type="active site" description="Proton donor" evidence="1">
    <location>
        <position position="175"/>
    </location>
</feature>
<feature type="site" description="Important for substrate specificity">
    <location>
        <position position="174"/>
    </location>
</feature>
<feature type="mutagenesis site" description="Reduced catalytic activity." evidence="3">
    <original>Y</original>
    <variation>A</variation>
    <location>
        <position position="60"/>
    </location>
</feature>
<feature type="mutagenesis site" description="Loss of catalytic activity." evidence="3">
    <original>D</original>
    <variation>N</variation>
    <location>
        <position position="168"/>
    </location>
</feature>
<feature type="mutagenesis site" description="Reduced catalytic activity." evidence="3">
    <original>G</original>
    <variation>L</variation>
    <location>
        <position position="169"/>
    </location>
</feature>
<feature type="mutagenesis site" description="Reduced catalytic activity." evidence="3">
    <original>D</original>
    <variation>E</variation>
    <variation>N</variation>
    <location>
        <position position="173"/>
    </location>
</feature>
<feature type="mutagenesis site" description="Reduced catalytic activity toward hybrid type oligosaccharides." evidence="3">
    <original>D</original>
    <variation>E</variation>
    <variation>N</variation>
    <location>
        <position position="174"/>
    </location>
</feature>
<feature type="mutagenesis site" description="Loss of catalytic activity." evidence="3">
    <original>E</original>
    <variation>A</variation>
    <location>
        <position position="175"/>
    </location>
</feature>
<feature type="mutagenesis site" description="Reduced catalytic activity." evidence="3">
    <original>Y</original>
    <variation>A</variation>
    <location>
        <position position="238"/>
    </location>
</feature>
<feature type="sequence conflict" description="In Ref. 2; AA sequence." evidence="5" ref="2">
    <original>W</original>
    <variation>G</variation>
    <location>
        <position position="194"/>
    </location>
</feature>
<dbReference type="EC" id="3.2.1.96"/>
<dbReference type="EMBL" id="AB053207">
    <property type="protein sequence ID" value="BAB20938.1"/>
    <property type="molecule type" value="Genomic_DNA"/>
</dbReference>
<dbReference type="PIR" id="S19538">
    <property type="entry name" value="S19538"/>
</dbReference>
<dbReference type="SMR" id="P80036"/>
<dbReference type="CAZy" id="GH18">
    <property type="family name" value="Glycoside Hydrolase Family 18"/>
</dbReference>
<dbReference type="GO" id="GO:0005576">
    <property type="term" value="C:extracellular region"/>
    <property type="evidence" value="ECO:0007669"/>
    <property type="project" value="UniProtKB-SubCell"/>
</dbReference>
<dbReference type="GO" id="GO:0033925">
    <property type="term" value="F:mannosyl-glycoprotein endo-beta-N-acetylglucosaminidase activity"/>
    <property type="evidence" value="ECO:0007669"/>
    <property type="project" value="UniProtKB-EC"/>
</dbReference>
<dbReference type="GO" id="GO:0005975">
    <property type="term" value="P:carbohydrate metabolic process"/>
    <property type="evidence" value="ECO:0007669"/>
    <property type="project" value="InterPro"/>
</dbReference>
<dbReference type="CDD" id="cd06542">
    <property type="entry name" value="GH18_EndoS-like"/>
    <property type="match status" value="1"/>
</dbReference>
<dbReference type="Gene3D" id="3.20.20.80">
    <property type="entry name" value="Glycosidases"/>
    <property type="match status" value="1"/>
</dbReference>
<dbReference type="InterPro" id="IPR016289">
    <property type="entry name" value="Endo-Fsp"/>
</dbReference>
<dbReference type="InterPro" id="IPR054861">
    <property type="entry name" value="Endoglyc_H"/>
</dbReference>
<dbReference type="InterPro" id="IPR001223">
    <property type="entry name" value="Glyco_hydro18_cat"/>
</dbReference>
<dbReference type="InterPro" id="IPR001579">
    <property type="entry name" value="Glyco_hydro_18_chit_AS"/>
</dbReference>
<dbReference type="InterPro" id="IPR017853">
    <property type="entry name" value="Glycoside_hydrolase_SF"/>
</dbReference>
<dbReference type="NCBIfam" id="NF045482">
    <property type="entry name" value="Endoglyc_H"/>
    <property type="match status" value="1"/>
</dbReference>
<dbReference type="Pfam" id="PF00704">
    <property type="entry name" value="Glyco_hydro_18"/>
    <property type="match status" value="1"/>
</dbReference>
<dbReference type="PIRSF" id="PIRSF001103">
    <property type="entry name" value="Endo-b-N-acetylglucosaminidase"/>
    <property type="match status" value="1"/>
</dbReference>
<dbReference type="SUPFAM" id="SSF51445">
    <property type="entry name" value="(Trans)glycosidases"/>
    <property type="match status" value="1"/>
</dbReference>
<dbReference type="PROSITE" id="PS01095">
    <property type="entry name" value="GH18_1"/>
    <property type="match status" value="1"/>
</dbReference>
<dbReference type="PROSITE" id="PS51910">
    <property type="entry name" value="GH18_2"/>
    <property type="match status" value="1"/>
</dbReference>
<keyword id="KW-0903">Direct protein sequencing</keyword>
<keyword id="KW-0326">Glycosidase</keyword>
<keyword id="KW-0378">Hydrolase</keyword>
<keyword id="KW-0964">Secreted</keyword>
<keyword id="KW-0732">Signal</keyword>
<accession>P80036</accession>
<accession>Q9F1K1</accession>
<proteinExistence type="evidence at protein level"/>
<evidence type="ECO:0000255" key="1">
    <source>
        <dbReference type="PROSITE-ProRule" id="PRU01258"/>
    </source>
</evidence>
<evidence type="ECO:0000256" key="2">
    <source>
        <dbReference type="SAM" id="MobiDB-lite"/>
    </source>
</evidence>
<evidence type="ECO:0000269" key="3">
    <source>
    </source>
</evidence>
<evidence type="ECO:0000269" key="4">
    <source>
    </source>
</evidence>
<evidence type="ECO:0000305" key="5"/>
<name>EBAG_FLAST</name>